<gene>
    <name evidence="1" type="primary">nudL</name>
    <name type="ordered locus">ESA_01440</name>
</gene>
<evidence type="ECO:0000255" key="1">
    <source>
        <dbReference type="HAMAP-Rule" id="MF_01592"/>
    </source>
</evidence>
<proteinExistence type="inferred from homology"/>
<sequence length="192" mass="21273">MENSPLTLDRFLSRFQLLRPQMSRSSLNQRQAAVLVPVVRRPEPGLLLTKRAATLRKHAGQVAFPGGAVDDTDASLIAAALREAQEEVAIPPEAVDVIGVLPPVDSVTGFQVTPVVGIIPPDLPYHASEDEVAAVFEMPLAEALRLGRYHPLDIHRRGNHHRVWLSWYQHYFVWGMTAGIIRELALQIGEKP</sequence>
<feature type="chain" id="PRO_0000315569" description="Uncharacterized Nudix hydrolase NudL">
    <location>
        <begin position="1"/>
        <end position="192"/>
    </location>
</feature>
<feature type="domain" description="Nudix hydrolase" evidence="1">
    <location>
        <begin position="29"/>
        <end position="160"/>
    </location>
</feature>
<feature type="short sequence motif" description="Nudix box">
    <location>
        <begin position="67"/>
        <end position="89"/>
    </location>
</feature>
<feature type="binding site" evidence="1">
    <location>
        <position position="83"/>
    </location>
    <ligand>
        <name>Mg(2+)</name>
        <dbReference type="ChEBI" id="CHEBI:18420"/>
    </ligand>
</feature>
<feature type="binding site" evidence="1">
    <location>
        <position position="87"/>
    </location>
    <ligand>
        <name>Mg(2+)</name>
        <dbReference type="ChEBI" id="CHEBI:18420"/>
    </ligand>
</feature>
<protein>
    <recommendedName>
        <fullName evidence="1">Uncharacterized Nudix hydrolase NudL</fullName>
        <ecNumber evidence="1">3.6.1.-</ecNumber>
    </recommendedName>
</protein>
<dbReference type="EC" id="3.6.1.-" evidence="1"/>
<dbReference type="EMBL" id="CP000783">
    <property type="protein sequence ID" value="ABU76698.1"/>
    <property type="molecule type" value="Genomic_DNA"/>
</dbReference>
<dbReference type="RefSeq" id="WP_004387271.1">
    <property type="nucleotide sequence ID" value="NC_009778.1"/>
</dbReference>
<dbReference type="SMR" id="A7MKE8"/>
<dbReference type="KEGG" id="esa:ESA_01440"/>
<dbReference type="HOGENOM" id="CLU_040940_5_2_6"/>
<dbReference type="Proteomes" id="UP000000260">
    <property type="component" value="Chromosome"/>
</dbReference>
<dbReference type="GO" id="GO:0010945">
    <property type="term" value="F:coenzyme A diphosphatase activity"/>
    <property type="evidence" value="ECO:0007669"/>
    <property type="project" value="InterPro"/>
</dbReference>
<dbReference type="GO" id="GO:0000287">
    <property type="term" value="F:magnesium ion binding"/>
    <property type="evidence" value="ECO:0007669"/>
    <property type="project" value="UniProtKB-UniRule"/>
</dbReference>
<dbReference type="GO" id="GO:0030145">
    <property type="term" value="F:manganese ion binding"/>
    <property type="evidence" value="ECO:0007669"/>
    <property type="project" value="UniProtKB-UniRule"/>
</dbReference>
<dbReference type="GO" id="GO:0009132">
    <property type="term" value="P:nucleoside diphosphate metabolic process"/>
    <property type="evidence" value="ECO:0007669"/>
    <property type="project" value="InterPro"/>
</dbReference>
<dbReference type="CDD" id="cd03426">
    <property type="entry name" value="NUDIX_CoAse_Nudt7"/>
    <property type="match status" value="1"/>
</dbReference>
<dbReference type="Gene3D" id="3.90.79.10">
    <property type="entry name" value="Nucleoside Triphosphate Pyrophosphohydrolase"/>
    <property type="match status" value="1"/>
</dbReference>
<dbReference type="HAMAP" id="MF_01592">
    <property type="entry name" value="Nudix_NudL"/>
    <property type="match status" value="1"/>
</dbReference>
<dbReference type="InterPro" id="IPR045121">
    <property type="entry name" value="CoAse"/>
</dbReference>
<dbReference type="InterPro" id="IPR015797">
    <property type="entry name" value="NUDIX_hydrolase-like_dom_sf"/>
</dbReference>
<dbReference type="InterPro" id="IPR000086">
    <property type="entry name" value="NUDIX_hydrolase_dom"/>
</dbReference>
<dbReference type="InterPro" id="IPR000059">
    <property type="entry name" value="NUDIX_hydrolase_NudL_CS"/>
</dbReference>
<dbReference type="InterPro" id="IPR023735">
    <property type="entry name" value="Nudix_NudL"/>
</dbReference>
<dbReference type="NCBIfam" id="NF007980">
    <property type="entry name" value="PRK10707.1"/>
    <property type="match status" value="1"/>
</dbReference>
<dbReference type="PANTHER" id="PTHR12992:SF11">
    <property type="entry name" value="MITOCHONDRIAL COENZYME A DIPHOSPHATASE NUDT8"/>
    <property type="match status" value="1"/>
</dbReference>
<dbReference type="PANTHER" id="PTHR12992">
    <property type="entry name" value="NUDIX HYDROLASE"/>
    <property type="match status" value="1"/>
</dbReference>
<dbReference type="Pfam" id="PF00293">
    <property type="entry name" value="NUDIX"/>
    <property type="match status" value="1"/>
</dbReference>
<dbReference type="SUPFAM" id="SSF55811">
    <property type="entry name" value="Nudix"/>
    <property type="match status" value="1"/>
</dbReference>
<dbReference type="PROSITE" id="PS51462">
    <property type="entry name" value="NUDIX"/>
    <property type="match status" value="1"/>
</dbReference>
<dbReference type="PROSITE" id="PS01293">
    <property type="entry name" value="NUDIX_COA"/>
    <property type="match status" value="1"/>
</dbReference>
<reference key="1">
    <citation type="journal article" date="2010" name="PLoS ONE">
        <title>Genome sequence of Cronobacter sakazakii BAA-894 and comparative genomic hybridization analysis with other Cronobacter species.</title>
        <authorList>
            <person name="Kucerova E."/>
            <person name="Clifton S.W."/>
            <person name="Xia X.Q."/>
            <person name="Long F."/>
            <person name="Porwollik S."/>
            <person name="Fulton L."/>
            <person name="Fronick C."/>
            <person name="Minx P."/>
            <person name="Kyung K."/>
            <person name="Warren W."/>
            <person name="Fulton R."/>
            <person name="Feng D."/>
            <person name="Wollam A."/>
            <person name="Shah N."/>
            <person name="Bhonagiri V."/>
            <person name="Nash W.E."/>
            <person name="Hallsworth-Pepin K."/>
            <person name="Wilson R.K."/>
            <person name="McClelland M."/>
            <person name="Forsythe S.J."/>
        </authorList>
    </citation>
    <scope>NUCLEOTIDE SEQUENCE [LARGE SCALE GENOMIC DNA]</scope>
    <source>
        <strain>ATCC BAA-894</strain>
    </source>
</reference>
<accession>A7MKE8</accession>
<comment type="function">
    <text evidence="1">Probably mediates the hydrolysis of some nucleoside diphosphate derivatives.</text>
</comment>
<comment type="cofactor">
    <cofactor evidence="1">
        <name>Mn(2+)</name>
        <dbReference type="ChEBI" id="CHEBI:29035"/>
    </cofactor>
    <cofactor evidence="1">
        <name>Mg(2+)</name>
        <dbReference type="ChEBI" id="CHEBI:18420"/>
    </cofactor>
</comment>
<comment type="similarity">
    <text evidence="1">Belongs to the Nudix hydrolase family. PCD1 subfamily.</text>
</comment>
<organism>
    <name type="scientific">Cronobacter sakazakii (strain ATCC BAA-894)</name>
    <name type="common">Enterobacter sakazakii</name>
    <dbReference type="NCBI Taxonomy" id="290339"/>
    <lineage>
        <taxon>Bacteria</taxon>
        <taxon>Pseudomonadati</taxon>
        <taxon>Pseudomonadota</taxon>
        <taxon>Gammaproteobacteria</taxon>
        <taxon>Enterobacterales</taxon>
        <taxon>Enterobacteriaceae</taxon>
        <taxon>Cronobacter</taxon>
    </lineage>
</organism>
<keyword id="KW-0378">Hydrolase</keyword>
<keyword id="KW-0460">Magnesium</keyword>
<keyword id="KW-0464">Manganese</keyword>
<keyword id="KW-0479">Metal-binding</keyword>
<keyword id="KW-1185">Reference proteome</keyword>
<name>NUDL_CROS8</name>